<feature type="chain" id="PRO_1000135167" description="ATP-dependent Clp protease proteolytic subunit">
    <location>
        <begin position="1"/>
        <end position="196"/>
    </location>
</feature>
<feature type="active site" description="Nucleophile" evidence="1">
    <location>
        <position position="96"/>
    </location>
</feature>
<feature type="active site" evidence="1">
    <location>
        <position position="121"/>
    </location>
</feature>
<accession>B8ZN39</accession>
<sequence>MIPVVIEQTSRGERSYDIYSRLLKDRIIMLTGPVEDNMANSVIAQLLFLDAQDSTKDIYLYVNTPGGSVSAGLAIVDTMNFIKADVQTIVMGMAASMGTVIASSGAKGKRFMLPNAEYMIHQPMGGTGGGTQQTDMAIAAEHLLKTRNTLEKILAENSGQSMEKVHADAERDNWMSAQETLEYGFIDEIMANNSLN</sequence>
<organism>
    <name type="scientific">Streptococcus pneumoniae (strain ATCC 700669 / Spain 23F-1)</name>
    <dbReference type="NCBI Taxonomy" id="561276"/>
    <lineage>
        <taxon>Bacteria</taxon>
        <taxon>Bacillati</taxon>
        <taxon>Bacillota</taxon>
        <taxon>Bacilli</taxon>
        <taxon>Lactobacillales</taxon>
        <taxon>Streptococcaceae</taxon>
        <taxon>Streptococcus</taxon>
    </lineage>
</organism>
<proteinExistence type="inferred from homology"/>
<reference key="1">
    <citation type="journal article" date="2009" name="J. Bacteriol.">
        <title>Role of conjugative elements in the evolution of the multidrug-resistant pandemic clone Streptococcus pneumoniae Spain23F ST81.</title>
        <authorList>
            <person name="Croucher N.J."/>
            <person name="Walker D."/>
            <person name="Romero P."/>
            <person name="Lennard N."/>
            <person name="Paterson G.K."/>
            <person name="Bason N.C."/>
            <person name="Mitchell A.M."/>
            <person name="Quail M.A."/>
            <person name="Andrew P.W."/>
            <person name="Parkhill J."/>
            <person name="Bentley S.D."/>
            <person name="Mitchell T.J."/>
        </authorList>
    </citation>
    <scope>NUCLEOTIDE SEQUENCE [LARGE SCALE GENOMIC DNA]</scope>
    <source>
        <strain>ATCC 700669 / Spain 23F-1</strain>
    </source>
</reference>
<protein>
    <recommendedName>
        <fullName evidence="1">ATP-dependent Clp protease proteolytic subunit</fullName>
        <ecNumber evidence="1">3.4.21.92</ecNumber>
    </recommendedName>
    <alternativeName>
        <fullName evidence="1">Endopeptidase Clp</fullName>
    </alternativeName>
</protein>
<dbReference type="EC" id="3.4.21.92" evidence="1"/>
<dbReference type="EMBL" id="FM211187">
    <property type="protein sequence ID" value="CAR68516.1"/>
    <property type="molecule type" value="Genomic_DNA"/>
</dbReference>
<dbReference type="RefSeq" id="WP_000613477.1">
    <property type="nucleotide sequence ID" value="NC_011900.1"/>
</dbReference>
<dbReference type="SMR" id="B8ZN39"/>
<dbReference type="MEROPS" id="S14.001"/>
<dbReference type="KEGG" id="sne:SPN23F06700"/>
<dbReference type="HOGENOM" id="CLU_058707_3_2_9"/>
<dbReference type="GO" id="GO:0005737">
    <property type="term" value="C:cytoplasm"/>
    <property type="evidence" value="ECO:0007669"/>
    <property type="project" value="UniProtKB-SubCell"/>
</dbReference>
<dbReference type="GO" id="GO:0009368">
    <property type="term" value="C:endopeptidase Clp complex"/>
    <property type="evidence" value="ECO:0007669"/>
    <property type="project" value="TreeGrafter"/>
</dbReference>
<dbReference type="GO" id="GO:0004176">
    <property type="term" value="F:ATP-dependent peptidase activity"/>
    <property type="evidence" value="ECO:0007669"/>
    <property type="project" value="InterPro"/>
</dbReference>
<dbReference type="GO" id="GO:0051117">
    <property type="term" value="F:ATPase binding"/>
    <property type="evidence" value="ECO:0007669"/>
    <property type="project" value="TreeGrafter"/>
</dbReference>
<dbReference type="GO" id="GO:0004252">
    <property type="term" value="F:serine-type endopeptidase activity"/>
    <property type="evidence" value="ECO:0007669"/>
    <property type="project" value="UniProtKB-UniRule"/>
</dbReference>
<dbReference type="GO" id="GO:0006515">
    <property type="term" value="P:protein quality control for misfolded or incompletely synthesized proteins"/>
    <property type="evidence" value="ECO:0007669"/>
    <property type="project" value="TreeGrafter"/>
</dbReference>
<dbReference type="CDD" id="cd07017">
    <property type="entry name" value="S14_ClpP_2"/>
    <property type="match status" value="1"/>
</dbReference>
<dbReference type="FunFam" id="3.90.226.10:FF:000014">
    <property type="entry name" value="ATP-dependent Clp protease proteolytic subunit"/>
    <property type="match status" value="1"/>
</dbReference>
<dbReference type="Gene3D" id="3.90.226.10">
    <property type="entry name" value="2-enoyl-CoA Hydratase, Chain A, domain 1"/>
    <property type="match status" value="1"/>
</dbReference>
<dbReference type="HAMAP" id="MF_00444">
    <property type="entry name" value="ClpP"/>
    <property type="match status" value="1"/>
</dbReference>
<dbReference type="InterPro" id="IPR001907">
    <property type="entry name" value="ClpP"/>
</dbReference>
<dbReference type="InterPro" id="IPR029045">
    <property type="entry name" value="ClpP/crotonase-like_dom_sf"/>
</dbReference>
<dbReference type="InterPro" id="IPR023562">
    <property type="entry name" value="ClpP/TepA"/>
</dbReference>
<dbReference type="InterPro" id="IPR033135">
    <property type="entry name" value="ClpP_His_AS"/>
</dbReference>
<dbReference type="InterPro" id="IPR018215">
    <property type="entry name" value="ClpP_Ser_AS"/>
</dbReference>
<dbReference type="NCBIfam" id="NF001368">
    <property type="entry name" value="PRK00277.1"/>
    <property type="match status" value="1"/>
</dbReference>
<dbReference type="NCBIfam" id="NF009205">
    <property type="entry name" value="PRK12553.1"/>
    <property type="match status" value="1"/>
</dbReference>
<dbReference type="PANTHER" id="PTHR10381">
    <property type="entry name" value="ATP-DEPENDENT CLP PROTEASE PROTEOLYTIC SUBUNIT"/>
    <property type="match status" value="1"/>
</dbReference>
<dbReference type="PANTHER" id="PTHR10381:SF70">
    <property type="entry name" value="ATP-DEPENDENT CLP PROTEASE PROTEOLYTIC SUBUNIT"/>
    <property type="match status" value="1"/>
</dbReference>
<dbReference type="Pfam" id="PF00574">
    <property type="entry name" value="CLP_protease"/>
    <property type="match status" value="1"/>
</dbReference>
<dbReference type="PRINTS" id="PR00127">
    <property type="entry name" value="CLPPROTEASEP"/>
</dbReference>
<dbReference type="SUPFAM" id="SSF52096">
    <property type="entry name" value="ClpP/crotonase"/>
    <property type="match status" value="1"/>
</dbReference>
<dbReference type="PROSITE" id="PS00382">
    <property type="entry name" value="CLP_PROTEASE_HIS"/>
    <property type="match status" value="1"/>
</dbReference>
<dbReference type="PROSITE" id="PS00381">
    <property type="entry name" value="CLP_PROTEASE_SER"/>
    <property type="match status" value="1"/>
</dbReference>
<gene>
    <name evidence="1" type="primary">clpP</name>
    <name type="ordered locus">SPN23F06700</name>
</gene>
<comment type="function">
    <text evidence="1">Cleaves peptides in various proteins in a process that requires ATP hydrolysis. Has a chymotrypsin-like activity. Plays a major role in the degradation of misfolded proteins.</text>
</comment>
<comment type="catalytic activity">
    <reaction evidence="1">
        <text>Hydrolysis of proteins to small peptides in the presence of ATP and magnesium. alpha-casein is the usual test substrate. In the absence of ATP, only oligopeptides shorter than five residues are hydrolyzed (such as succinyl-Leu-Tyr-|-NHMec, and Leu-Tyr-Leu-|-Tyr-Trp, in which cleavage of the -Tyr-|-Leu- and -Tyr-|-Trp bonds also occurs).</text>
        <dbReference type="EC" id="3.4.21.92"/>
    </reaction>
</comment>
<comment type="subunit">
    <text evidence="1">Fourteen ClpP subunits assemble into 2 heptameric rings which stack back to back to give a disk-like structure with a central cavity, resembling the structure of eukaryotic proteasomes.</text>
</comment>
<comment type="subcellular location">
    <subcellularLocation>
        <location evidence="1">Cytoplasm</location>
    </subcellularLocation>
</comment>
<comment type="similarity">
    <text evidence="1">Belongs to the peptidase S14 family.</text>
</comment>
<name>CLPP_STRPJ</name>
<keyword id="KW-0963">Cytoplasm</keyword>
<keyword id="KW-0378">Hydrolase</keyword>
<keyword id="KW-0645">Protease</keyword>
<keyword id="KW-0720">Serine protease</keyword>
<evidence type="ECO:0000255" key="1">
    <source>
        <dbReference type="HAMAP-Rule" id="MF_00444"/>
    </source>
</evidence>